<organism>
    <name type="scientific">Mycobacterium tuberculosis (strain CDC 1551 / Oshkosh)</name>
    <dbReference type="NCBI Taxonomy" id="83331"/>
    <lineage>
        <taxon>Bacteria</taxon>
        <taxon>Bacillati</taxon>
        <taxon>Actinomycetota</taxon>
        <taxon>Actinomycetes</taxon>
        <taxon>Mycobacteriales</taxon>
        <taxon>Mycobacteriaceae</taxon>
        <taxon>Mycobacterium</taxon>
        <taxon>Mycobacterium tuberculosis complex</taxon>
    </lineage>
</organism>
<dbReference type="EMBL" id="AE000516">
    <property type="protein sequence ID" value="AAK44973.1"/>
    <property type="molecule type" value="Genomic_DNA"/>
</dbReference>
<dbReference type="PIR" id="E70643">
    <property type="entry name" value="E70643"/>
</dbReference>
<dbReference type="RefSeq" id="WP_003403649.1">
    <property type="nucleotide sequence ID" value="NZ_KK341227.1"/>
</dbReference>
<dbReference type="SMR" id="P9WHD8"/>
<dbReference type="GeneID" id="93493169"/>
<dbReference type="KEGG" id="mtc:MT0741"/>
<dbReference type="PATRIC" id="fig|83331.31.peg.792"/>
<dbReference type="HOGENOM" id="CLU_095071_2_1_11"/>
<dbReference type="Proteomes" id="UP000001020">
    <property type="component" value="Chromosome"/>
</dbReference>
<dbReference type="GO" id="GO:0022625">
    <property type="term" value="C:cytosolic large ribosomal subunit"/>
    <property type="evidence" value="ECO:0007669"/>
    <property type="project" value="TreeGrafter"/>
</dbReference>
<dbReference type="GO" id="GO:0070180">
    <property type="term" value="F:large ribosomal subunit rRNA binding"/>
    <property type="evidence" value="ECO:0007669"/>
    <property type="project" value="TreeGrafter"/>
</dbReference>
<dbReference type="GO" id="GO:0003735">
    <property type="term" value="F:structural constituent of ribosome"/>
    <property type="evidence" value="ECO:0007669"/>
    <property type="project" value="InterPro"/>
</dbReference>
<dbReference type="GO" id="GO:0006412">
    <property type="term" value="P:translation"/>
    <property type="evidence" value="ECO:0007669"/>
    <property type="project" value="UniProtKB-UniRule"/>
</dbReference>
<dbReference type="CDD" id="cd00337">
    <property type="entry name" value="Ribosomal_uL14"/>
    <property type="match status" value="1"/>
</dbReference>
<dbReference type="FunFam" id="2.40.150.20:FF:000001">
    <property type="entry name" value="50S ribosomal protein L14"/>
    <property type="match status" value="1"/>
</dbReference>
<dbReference type="Gene3D" id="2.40.150.20">
    <property type="entry name" value="Ribosomal protein L14"/>
    <property type="match status" value="1"/>
</dbReference>
<dbReference type="HAMAP" id="MF_01367">
    <property type="entry name" value="Ribosomal_uL14"/>
    <property type="match status" value="1"/>
</dbReference>
<dbReference type="InterPro" id="IPR000218">
    <property type="entry name" value="Ribosomal_uL14"/>
</dbReference>
<dbReference type="InterPro" id="IPR005745">
    <property type="entry name" value="Ribosomal_uL14_bac-type"/>
</dbReference>
<dbReference type="InterPro" id="IPR019972">
    <property type="entry name" value="Ribosomal_uL14_CS"/>
</dbReference>
<dbReference type="InterPro" id="IPR036853">
    <property type="entry name" value="Ribosomal_uL14_sf"/>
</dbReference>
<dbReference type="NCBIfam" id="TIGR01067">
    <property type="entry name" value="rplN_bact"/>
    <property type="match status" value="1"/>
</dbReference>
<dbReference type="PANTHER" id="PTHR11761">
    <property type="entry name" value="50S/60S RIBOSOMAL PROTEIN L14/L23"/>
    <property type="match status" value="1"/>
</dbReference>
<dbReference type="PANTHER" id="PTHR11761:SF3">
    <property type="entry name" value="LARGE RIBOSOMAL SUBUNIT PROTEIN UL14M"/>
    <property type="match status" value="1"/>
</dbReference>
<dbReference type="Pfam" id="PF00238">
    <property type="entry name" value="Ribosomal_L14"/>
    <property type="match status" value="1"/>
</dbReference>
<dbReference type="SMART" id="SM01374">
    <property type="entry name" value="Ribosomal_L14"/>
    <property type="match status" value="1"/>
</dbReference>
<dbReference type="SUPFAM" id="SSF50193">
    <property type="entry name" value="Ribosomal protein L14"/>
    <property type="match status" value="1"/>
</dbReference>
<dbReference type="PROSITE" id="PS00049">
    <property type="entry name" value="RIBOSOMAL_L14"/>
    <property type="match status" value="1"/>
</dbReference>
<keyword id="KW-1185">Reference proteome</keyword>
<keyword id="KW-0687">Ribonucleoprotein</keyword>
<keyword id="KW-0689">Ribosomal protein</keyword>
<keyword id="KW-0694">RNA-binding</keyword>
<keyword id="KW-0699">rRNA-binding</keyword>
<name>RL14_MYCTO</name>
<comment type="function">
    <text evidence="1">Binds to 23S rRNA. Forms part of two intersubunit bridges in the 70S ribosome.</text>
</comment>
<comment type="subunit">
    <text evidence="1">Part of the 50S ribosomal subunit. Forms a cluster with proteins L3 and L19. In the 70S ribosome, L14 and L19 interact and together make contacts with the 16S rRNA in bridges B5 and B8.</text>
</comment>
<comment type="similarity">
    <text evidence="1">Belongs to the universal ribosomal protein uL14 family.</text>
</comment>
<feature type="chain" id="PRO_0000428204" description="Large ribosomal subunit protein uL14">
    <location>
        <begin position="1"/>
        <end position="122"/>
    </location>
</feature>
<protein>
    <recommendedName>
        <fullName evidence="1">Large ribosomal subunit protein uL14</fullName>
    </recommendedName>
    <alternativeName>
        <fullName evidence="2">50S ribosomal protein L14</fullName>
    </alternativeName>
</protein>
<proteinExistence type="inferred from homology"/>
<reference key="1">
    <citation type="journal article" date="2002" name="J. Bacteriol.">
        <title>Whole-genome comparison of Mycobacterium tuberculosis clinical and laboratory strains.</title>
        <authorList>
            <person name="Fleischmann R.D."/>
            <person name="Alland D."/>
            <person name="Eisen J.A."/>
            <person name="Carpenter L."/>
            <person name="White O."/>
            <person name="Peterson J.D."/>
            <person name="DeBoy R.T."/>
            <person name="Dodson R.J."/>
            <person name="Gwinn M.L."/>
            <person name="Haft D.H."/>
            <person name="Hickey E.K."/>
            <person name="Kolonay J.F."/>
            <person name="Nelson W.C."/>
            <person name="Umayam L.A."/>
            <person name="Ermolaeva M.D."/>
            <person name="Salzberg S.L."/>
            <person name="Delcher A."/>
            <person name="Utterback T.R."/>
            <person name="Weidman J.F."/>
            <person name="Khouri H.M."/>
            <person name="Gill J."/>
            <person name="Mikula A."/>
            <person name="Bishai W."/>
            <person name="Jacobs W.R. Jr."/>
            <person name="Venter J.C."/>
            <person name="Fraser C.M."/>
        </authorList>
    </citation>
    <scope>NUCLEOTIDE SEQUENCE [LARGE SCALE GENOMIC DNA]</scope>
    <source>
        <strain>CDC 1551 / Oshkosh</strain>
    </source>
</reference>
<evidence type="ECO:0000255" key="1">
    <source>
        <dbReference type="HAMAP-Rule" id="MF_01367"/>
    </source>
</evidence>
<evidence type="ECO:0000305" key="2"/>
<accession>P9WHD8</accession>
<accession>L0T7A6</accession>
<accession>P66069</accession>
<accession>P95062</accession>
<sequence>MIQQESRLKVADNTGAKEILCIRVLGGSSRRYAGIGDVIVATVKDAIPGGNVKRGDVVKAVVVRTVKERRRPDGSYIKFDENAAVIIKPDNDPRGTRIFGPVGRELREKRFMKIISLAPEVL</sequence>
<gene>
    <name evidence="1" type="primary">rplN</name>
    <name type="ordered locus">MT0741</name>
</gene>